<feature type="chain" id="PRO_0000291116" description="UPF0434 protein NMA0874">
    <location>
        <begin position="1"/>
        <end position="60"/>
    </location>
</feature>
<feature type="strand" evidence="2">
    <location>
        <begin position="4"/>
        <end position="6"/>
    </location>
</feature>
<feature type="strand" evidence="2">
    <location>
        <begin position="12"/>
        <end position="14"/>
    </location>
</feature>
<feature type="strand" evidence="2">
    <location>
        <begin position="19"/>
        <end position="21"/>
    </location>
</feature>
<feature type="turn" evidence="2">
    <location>
        <begin position="22"/>
        <end position="25"/>
    </location>
</feature>
<feature type="strand" evidence="2">
    <location>
        <begin position="26"/>
        <end position="29"/>
    </location>
</feature>
<feature type="turn" evidence="2">
    <location>
        <begin position="30"/>
        <end position="33"/>
    </location>
</feature>
<feature type="strand" evidence="2">
    <location>
        <begin position="34"/>
        <end position="39"/>
    </location>
</feature>
<feature type="turn" evidence="2">
    <location>
        <begin position="47"/>
        <end position="49"/>
    </location>
</feature>
<feature type="helix" evidence="2">
    <location>
        <begin position="55"/>
        <end position="59"/>
    </location>
</feature>
<comment type="similarity">
    <text evidence="1">Belongs to the UPF0434 family.</text>
</comment>
<dbReference type="EMBL" id="AL157959">
    <property type="protein sequence ID" value="CAM08109.1"/>
    <property type="molecule type" value="Genomic_DNA"/>
</dbReference>
<dbReference type="RefSeq" id="WP_002221286.1">
    <property type="nucleotide sequence ID" value="NC_003116.1"/>
</dbReference>
<dbReference type="PDB" id="2JR6">
    <property type="method" value="NMR"/>
    <property type="chains" value="A=1-60"/>
</dbReference>
<dbReference type="PDBsum" id="2JR6"/>
<dbReference type="SMR" id="A1IQS5"/>
<dbReference type="EnsemblBacteria" id="CAM08109">
    <property type="protein sequence ID" value="CAM08109"/>
    <property type="gene ID" value="NMA0874"/>
</dbReference>
<dbReference type="KEGG" id="nma:NMA0874"/>
<dbReference type="HOGENOM" id="CLU_155659_2_2_4"/>
<dbReference type="EvolutionaryTrace" id="A1IQS5"/>
<dbReference type="Proteomes" id="UP000000626">
    <property type="component" value="Chromosome"/>
</dbReference>
<dbReference type="GO" id="GO:0005829">
    <property type="term" value="C:cytosol"/>
    <property type="evidence" value="ECO:0007669"/>
    <property type="project" value="TreeGrafter"/>
</dbReference>
<dbReference type="FunFam" id="2.20.25.10:FF:000002">
    <property type="entry name" value="UPF0434 protein YcaR"/>
    <property type="match status" value="1"/>
</dbReference>
<dbReference type="Gene3D" id="2.20.25.10">
    <property type="match status" value="1"/>
</dbReference>
<dbReference type="HAMAP" id="MF_01187">
    <property type="entry name" value="UPF0434"/>
    <property type="match status" value="1"/>
</dbReference>
<dbReference type="InterPro" id="IPR005651">
    <property type="entry name" value="Trm112-like"/>
</dbReference>
<dbReference type="PANTHER" id="PTHR33505:SF4">
    <property type="entry name" value="PROTEIN PREY, MITOCHONDRIAL"/>
    <property type="match status" value="1"/>
</dbReference>
<dbReference type="PANTHER" id="PTHR33505">
    <property type="entry name" value="ZGC:162634"/>
    <property type="match status" value="1"/>
</dbReference>
<dbReference type="Pfam" id="PF03966">
    <property type="entry name" value="Trm112p"/>
    <property type="match status" value="1"/>
</dbReference>
<dbReference type="SUPFAM" id="SSF158997">
    <property type="entry name" value="Trm112p-like"/>
    <property type="match status" value="1"/>
</dbReference>
<name>Y874_NEIMA</name>
<keyword id="KW-0002">3D-structure</keyword>
<protein>
    <recommendedName>
        <fullName evidence="1">UPF0434 protein NMA0874</fullName>
    </recommendedName>
</protein>
<proteinExistence type="evidence at protein level"/>
<reference key="1">
    <citation type="journal article" date="2000" name="Nature">
        <title>Complete DNA sequence of a serogroup A strain of Neisseria meningitidis Z2491.</title>
        <authorList>
            <person name="Parkhill J."/>
            <person name="Achtman M."/>
            <person name="James K.D."/>
            <person name="Bentley S.D."/>
            <person name="Churcher C.M."/>
            <person name="Klee S.R."/>
            <person name="Morelli G."/>
            <person name="Basham D."/>
            <person name="Brown D."/>
            <person name="Chillingworth T."/>
            <person name="Davies R.M."/>
            <person name="Davis P."/>
            <person name="Devlin K."/>
            <person name="Feltwell T."/>
            <person name="Hamlin N."/>
            <person name="Holroyd S."/>
            <person name="Jagels K."/>
            <person name="Leather S."/>
            <person name="Moule S."/>
            <person name="Mungall K.L."/>
            <person name="Quail M.A."/>
            <person name="Rajandream M.A."/>
            <person name="Rutherford K.M."/>
            <person name="Simmonds M."/>
            <person name="Skelton J."/>
            <person name="Whitehead S."/>
            <person name="Spratt B.G."/>
            <person name="Barrell B.G."/>
        </authorList>
    </citation>
    <scope>NUCLEOTIDE SEQUENCE [LARGE SCALE GENOMIC DNA]</scope>
    <source>
        <strain>DSM 15465 / Z2491</strain>
    </source>
</reference>
<accession>A1IQS5</accession>
<sequence length="60" mass="7065">MEKKFLDILVCPVTKGRLEYHQDKQELWSRQAKLAYPIKDGIPYMLENEARALSEEELKA</sequence>
<evidence type="ECO:0000255" key="1">
    <source>
        <dbReference type="HAMAP-Rule" id="MF_01187"/>
    </source>
</evidence>
<evidence type="ECO:0007829" key="2">
    <source>
        <dbReference type="PDB" id="2JR6"/>
    </source>
</evidence>
<gene>
    <name type="ordered locus">NMA0874</name>
</gene>
<organism>
    <name type="scientific">Neisseria meningitidis serogroup A / serotype 4A (strain DSM 15465 / Z2491)</name>
    <dbReference type="NCBI Taxonomy" id="122587"/>
    <lineage>
        <taxon>Bacteria</taxon>
        <taxon>Pseudomonadati</taxon>
        <taxon>Pseudomonadota</taxon>
        <taxon>Betaproteobacteria</taxon>
        <taxon>Neisseriales</taxon>
        <taxon>Neisseriaceae</taxon>
        <taxon>Neisseria</taxon>
    </lineage>
</organism>